<dbReference type="EMBL" id="CP000542">
    <property type="protein sequence ID" value="ABM57313.1"/>
    <property type="molecule type" value="Genomic_DNA"/>
</dbReference>
<dbReference type="RefSeq" id="WP_011809320.1">
    <property type="nucleotide sequence ID" value="NC_008786.1"/>
</dbReference>
<dbReference type="SMR" id="A1WI56"/>
<dbReference type="STRING" id="391735.Veis_1554"/>
<dbReference type="GeneID" id="76460174"/>
<dbReference type="KEGG" id="vei:Veis_1554"/>
<dbReference type="eggNOG" id="COG0216">
    <property type="taxonomic scope" value="Bacteria"/>
</dbReference>
<dbReference type="HOGENOM" id="CLU_036856_0_1_4"/>
<dbReference type="OrthoDB" id="9806673at2"/>
<dbReference type="Proteomes" id="UP000000374">
    <property type="component" value="Chromosome"/>
</dbReference>
<dbReference type="GO" id="GO:0005737">
    <property type="term" value="C:cytoplasm"/>
    <property type="evidence" value="ECO:0007669"/>
    <property type="project" value="UniProtKB-SubCell"/>
</dbReference>
<dbReference type="GO" id="GO:0016149">
    <property type="term" value="F:translation release factor activity, codon specific"/>
    <property type="evidence" value="ECO:0007669"/>
    <property type="project" value="UniProtKB-UniRule"/>
</dbReference>
<dbReference type="FunFam" id="3.30.160.20:FF:000004">
    <property type="entry name" value="Peptide chain release factor 1"/>
    <property type="match status" value="1"/>
</dbReference>
<dbReference type="FunFam" id="3.30.70.1660:FF:000002">
    <property type="entry name" value="Peptide chain release factor 1"/>
    <property type="match status" value="1"/>
</dbReference>
<dbReference type="FunFam" id="3.30.70.1660:FF:000004">
    <property type="entry name" value="Peptide chain release factor 1"/>
    <property type="match status" value="1"/>
</dbReference>
<dbReference type="Gene3D" id="3.30.160.20">
    <property type="match status" value="1"/>
</dbReference>
<dbReference type="Gene3D" id="3.30.70.1660">
    <property type="match status" value="1"/>
</dbReference>
<dbReference type="Gene3D" id="6.10.140.1950">
    <property type="match status" value="1"/>
</dbReference>
<dbReference type="HAMAP" id="MF_00093">
    <property type="entry name" value="Rel_fac_1"/>
    <property type="match status" value="1"/>
</dbReference>
<dbReference type="InterPro" id="IPR005139">
    <property type="entry name" value="PCRF"/>
</dbReference>
<dbReference type="InterPro" id="IPR000352">
    <property type="entry name" value="Pep_chain_release_fac_I"/>
</dbReference>
<dbReference type="InterPro" id="IPR045853">
    <property type="entry name" value="Pep_chain_release_fac_I_sf"/>
</dbReference>
<dbReference type="InterPro" id="IPR050057">
    <property type="entry name" value="Prokaryotic/Mito_RF"/>
</dbReference>
<dbReference type="InterPro" id="IPR004373">
    <property type="entry name" value="RF-1"/>
</dbReference>
<dbReference type="NCBIfam" id="TIGR00019">
    <property type="entry name" value="prfA"/>
    <property type="match status" value="1"/>
</dbReference>
<dbReference type="NCBIfam" id="NF001859">
    <property type="entry name" value="PRK00591.1"/>
    <property type="match status" value="1"/>
</dbReference>
<dbReference type="PANTHER" id="PTHR43804">
    <property type="entry name" value="LD18447P"/>
    <property type="match status" value="1"/>
</dbReference>
<dbReference type="PANTHER" id="PTHR43804:SF7">
    <property type="entry name" value="LD18447P"/>
    <property type="match status" value="1"/>
</dbReference>
<dbReference type="Pfam" id="PF03462">
    <property type="entry name" value="PCRF"/>
    <property type="match status" value="1"/>
</dbReference>
<dbReference type="Pfam" id="PF00472">
    <property type="entry name" value="RF-1"/>
    <property type="match status" value="1"/>
</dbReference>
<dbReference type="SMART" id="SM00937">
    <property type="entry name" value="PCRF"/>
    <property type="match status" value="1"/>
</dbReference>
<dbReference type="SUPFAM" id="SSF75620">
    <property type="entry name" value="Release factor"/>
    <property type="match status" value="1"/>
</dbReference>
<dbReference type="PROSITE" id="PS00745">
    <property type="entry name" value="RF_PROK_I"/>
    <property type="match status" value="1"/>
</dbReference>
<sequence>MKPFLRSQLARHAQRLGELDFLLARPDIMADMVQYRSIAREHAEVTQVAGRYARYLQREADLGAARELLADPGMAELAQEEIDSSQTELRQLEDELQRLLLPKEPDDARNAFVEIRAGTGGDESALFAGDLTRMYTRYAARRGWQVQVLSENPAELGGYKEIVLRIDGEQVYGTLKFESGGHRVQRVPATETQGRVHTSACTVAVMPEPDPARAIALNPAELRIDTFRASGAGGQHINKTDSAVRVVHLPTGIVAECQDGRSQHGNKARALQVLQARLQEKERSERAAKEAALRKGLIGSGERSDRIRTYNFPQGRLTDHRIQLTLYQLQQLLDGELDPMLQALGHAREAEQLQELERG</sequence>
<proteinExistence type="inferred from homology"/>
<name>RF1_VEREI</name>
<evidence type="ECO:0000255" key="1">
    <source>
        <dbReference type="HAMAP-Rule" id="MF_00093"/>
    </source>
</evidence>
<accession>A1WI56</accession>
<gene>
    <name evidence="1" type="primary">prfA</name>
    <name type="ordered locus">Veis_1554</name>
</gene>
<feature type="chain" id="PRO_1000004964" description="Peptide chain release factor 1">
    <location>
        <begin position="1"/>
        <end position="359"/>
    </location>
</feature>
<feature type="modified residue" description="N5-methylglutamine" evidence="1">
    <location>
        <position position="235"/>
    </location>
</feature>
<keyword id="KW-0963">Cytoplasm</keyword>
<keyword id="KW-0488">Methylation</keyword>
<keyword id="KW-0648">Protein biosynthesis</keyword>
<keyword id="KW-1185">Reference proteome</keyword>
<reference key="1">
    <citation type="submission" date="2006-12" db="EMBL/GenBank/DDBJ databases">
        <title>Complete sequence of chromosome 1 of Verminephrobacter eiseniae EF01-2.</title>
        <authorList>
            <person name="Copeland A."/>
            <person name="Lucas S."/>
            <person name="Lapidus A."/>
            <person name="Barry K."/>
            <person name="Detter J.C."/>
            <person name="Glavina del Rio T."/>
            <person name="Dalin E."/>
            <person name="Tice H."/>
            <person name="Pitluck S."/>
            <person name="Chertkov O."/>
            <person name="Brettin T."/>
            <person name="Bruce D."/>
            <person name="Han C."/>
            <person name="Tapia R."/>
            <person name="Gilna P."/>
            <person name="Schmutz J."/>
            <person name="Larimer F."/>
            <person name="Land M."/>
            <person name="Hauser L."/>
            <person name="Kyrpides N."/>
            <person name="Kim E."/>
            <person name="Stahl D."/>
            <person name="Richardson P."/>
        </authorList>
    </citation>
    <scope>NUCLEOTIDE SEQUENCE [LARGE SCALE GENOMIC DNA]</scope>
    <source>
        <strain>EF01-2</strain>
    </source>
</reference>
<organism>
    <name type="scientific">Verminephrobacter eiseniae (strain EF01-2)</name>
    <dbReference type="NCBI Taxonomy" id="391735"/>
    <lineage>
        <taxon>Bacteria</taxon>
        <taxon>Pseudomonadati</taxon>
        <taxon>Pseudomonadota</taxon>
        <taxon>Betaproteobacteria</taxon>
        <taxon>Burkholderiales</taxon>
        <taxon>Comamonadaceae</taxon>
        <taxon>Verminephrobacter</taxon>
    </lineage>
</organism>
<comment type="function">
    <text evidence="1">Peptide chain release factor 1 directs the termination of translation in response to the peptide chain termination codons UAG and UAA.</text>
</comment>
<comment type="subcellular location">
    <subcellularLocation>
        <location evidence="1">Cytoplasm</location>
    </subcellularLocation>
</comment>
<comment type="PTM">
    <text evidence="1">Methylated by PrmC. Methylation increases the termination efficiency of RF1.</text>
</comment>
<comment type="similarity">
    <text evidence="1">Belongs to the prokaryotic/mitochondrial release factor family.</text>
</comment>
<protein>
    <recommendedName>
        <fullName evidence="1">Peptide chain release factor 1</fullName>
        <shortName evidence="1">RF-1</shortName>
    </recommendedName>
</protein>